<keyword id="KW-0007">Acetylation</keyword>
<keyword id="KW-0249">Electron transport</keyword>
<keyword id="KW-0274">FAD</keyword>
<keyword id="KW-0285">Flavoprotein</keyword>
<keyword id="KW-0496">Mitochondrion</keyword>
<keyword id="KW-1185">Reference proteome</keyword>
<keyword id="KW-0679">Respiratory chain</keyword>
<keyword id="KW-0809">Transit peptide</keyword>
<keyword id="KW-0813">Transport</keyword>
<protein>
    <recommendedName>
        <fullName>NADH dehydrogenase [ubiquinone] 1 alpha subcomplex subunit 9, mitochondrial</fullName>
    </recommendedName>
    <alternativeName>
        <fullName>Complex I-39kD</fullName>
        <shortName>CI-39kD</shortName>
    </alternativeName>
    <alternativeName>
        <fullName>NADH-ubiquinone oxidoreductase 39 kDa subunit</fullName>
    </alternativeName>
    <alternativeName>
        <fullName>Sperm flagella protein 3</fullName>
    </alternativeName>
</protein>
<feature type="transit peptide" description="Mitochondrion" evidence="1">
    <location>
        <begin position="1"/>
        <end position="35"/>
    </location>
</feature>
<feature type="chain" id="PRO_0000308374" description="NADH dehydrogenase [ubiquinone] 1 alpha subcomplex subunit 9, mitochondrial">
    <location>
        <begin position="36"/>
        <end position="377"/>
    </location>
</feature>
<feature type="modified residue" description="N6-succinyllysine" evidence="3">
    <location>
        <position position="175"/>
    </location>
</feature>
<feature type="modified residue" description="N6-acetyllysine" evidence="3">
    <location>
        <position position="189"/>
    </location>
</feature>
<feature type="modified residue" description="N6-acetyllysine" evidence="3">
    <location>
        <position position="370"/>
    </location>
</feature>
<organism>
    <name type="scientific">Rattus norvegicus</name>
    <name type="common">Rat</name>
    <dbReference type="NCBI Taxonomy" id="10116"/>
    <lineage>
        <taxon>Eukaryota</taxon>
        <taxon>Metazoa</taxon>
        <taxon>Chordata</taxon>
        <taxon>Craniata</taxon>
        <taxon>Vertebrata</taxon>
        <taxon>Euteleostomi</taxon>
        <taxon>Mammalia</taxon>
        <taxon>Eutheria</taxon>
        <taxon>Euarchontoglires</taxon>
        <taxon>Glires</taxon>
        <taxon>Rodentia</taxon>
        <taxon>Myomorpha</taxon>
        <taxon>Muroidea</taxon>
        <taxon>Muridae</taxon>
        <taxon>Murinae</taxon>
        <taxon>Rattus</taxon>
    </lineage>
</organism>
<evidence type="ECO:0000250" key="1"/>
<evidence type="ECO:0000250" key="2">
    <source>
        <dbReference type="UniProtKB" id="Q16795"/>
    </source>
</evidence>
<evidence type="ECO:0000250" key="3">
    <source>
        <dbReference type="UniProtKB" id="Q9DC69"/>
    </source>
</evidence>
<evidence type="ECO:0000255" key="4"/>
<evidence type="ECO:0000269" key="5">
    <source>
    </source>
</evidence>
<evidence type="ECO:0000269" key="6">
    <source>
    </source>
</evidence>
<evidence type="ECO:0000305" key="7"/>
<evidence type="ECO:0000312" key="8">
    <source>
        <dbReference type="EMBL" id="AAH91192.1"/>
    </source>
</evidence>
<evidence type="ECO:0000312" key="9">
    <source>
        <dbReference type="RGD" id="1307307"/>
    </source>
</evidence>
<proteinExistence type="evidence at protein level"/>
<dbReference type="EMBL" id="CH473964">
    <property type="protein sequence ID" value="EDM01826.1"/>
    <property type="molecule type" value="Genomic_DNA"/>
</dbReference>
<dbReference type="EMBL" id="BC091192">
    <property type="protein sequence ID" value="AAH91192.1"/>
    <property type="molecule type" value="mRNA"/>
</dbReference>
<dbReference type="EMBL" id="BC168777">
    <property type="protein sequence ID" value="AAI68777.1"/>
    <property type="molecule type" value="mRNA"/>
</dbReference>
<dbReference type="RefSeq" id="NP_001094222.1">
    <property type="nucleotide sequence ID" value="NM_001100752.1"/>
</dbReference>
<dbReference type="SMR" id="Q5BK63"/>
<dbReference type="BioGRID" id="263453">
    <property type="interactions" value="4"/>
</dbReference>
<dbReference type="FunCoup" id="Q5BK63">
    <property type="interactions" value="3133"/>
</dbReference>
<dbReference type="IntAct" id="Q5BK63">
    <property type="interactions" value="3"/>
</dbReference>
<dbReference type="MINT" id="Q5BK63"/>
<dbReference type="STRING" id="10116.ENSRNOP00000072757"/>
<dbReference type="CarbonylDB" id="Q5BK63"/>
<dbReference type="GlyGen" id="Q5BK63">
    <property type="glycosylation" value="7 sites, 1 O-linked glycan (6 sites)"/>
</dbReference>
<dbReference type="iPTMnet" id="Q5BK63"/>
<dbReference type="PhosphoSitePlus" id="Q5BK63"/>
<dbReference type="jPOST" id="Q5BK63"/>
<dbReference type="PaxDb" id="10116-ENSRNOP00000034135"/>
<dbReference type="GeneID" id="362440"/>
<dbReference type="KEGG" id="rno:362440"/>
<dbReference type="UCSC" id="RGD:1307307">
    <property type="organism name" value="rat"/>
</dbReference>
<dbReference type="AGR" id="RGD:1307307"/>
<dbReference type="CTD" id="4704"/>
<dbReference type="RGD" id="1307307">
    <property type="gene designation" value="Ndufa9"/>
</dbReference>
<dbReference type="VEuPathDB" id="HostDB:ENSRNOG00000061684"/>
<dbReference type="eggNOG" id="KOG2865">
    <property type="taxonomic scope" value="Eukaryota"/>
</dbReference>
<dbReference type="HOGENOM" id="CLU_007383_6_4_1"/>
<dbReference type="InParanoid" id="Q5BK63"/>
<dbReference type="OrthoDB" id="275457at2759"/>
<dbReference type="PhylomeDB" id="Q5BK63"/>
<dbReference type="TreeFam" id="TF105961"/>
<dbReference type="Reactome" id="R-RNO-611105">
    <property type="pathway name" value="Respiratory electron transport"/>
</dbReference>
<dbReference type="Reactome" id="R-RNO-6799198">
    <property type="pathway name" value="Complex I biogenesis"/>
</dbReference>
<dbReference type="PRO" id="PR:Q5BK63"/>
<dbReference type="Proteomes" id="UP000002494">
    <property type="component" value="Chromosome 4"/>
</dbReference>
<dbReference type="Proteomes" id="UP000234681">
    <property type="component" value="Chromosome 4"/>
</dbReference>
<dbReference type="Bgee" id="ENSRNOG00000061684">
    <property type="expression patterns" value="Expressed in heart and 20 other cell types or tissues"/>
</dbReference>
<dbReference type="GO" id="GO:0005743">
    <property type="term" value="C:mitochondrial inner membrane"/>
    <property type="evidence" value="ECO:0000266"/>
    <property type="project" value="RGD"/>
</dbReference>
<dbReference type="GO" id="GO:0005759">
    <property type="term" value="C:mitochondrial matrix"/>
    <property type="evidence" value="ECO:0000266"/>
    <property type="project" value="RGD"/>
</dbReference>
<dbReference type="GO" id="GO:0031966">
    <property type="term" value="C:mitochondrial membrane"/>
    <property type="evidence" value="ECO:0000266"/>
    <property type="project" value="RGD"/>
</dbReference>
<dbReference type="GO" id="GO:0005739">
    <property type="term" value="C:mitochondrion"/>
    <property type="evidence" value="ECO:0000266"/>
    <property type="project" value="RGD"/>
</dbReference>
<dbReference type="GO" id="GO:0045271">
    <property type="term" value="C:respiratory chain complex I"/>
    <property type="evidence" value="ECO:0000250"/>
    <property type="project" value="UniProtKB"/>
</dbReference>
<dbReference type="GO" id="GO:0003954">
    <property type="term" value="F:NADH dehydrogenase activity"/>
    <property type="evidence" value="ECO:0000266"/>
    <property type="project" value="RGD"/>
</dbReference>
<dbReference type="GO" id="GO:0044877">
    <property type="term" value="F:protein-containing complex binding"/>
    <property type="evidence" value="ECO:0000266"/>
    <property type="project" value="RGD"/>
</dbReference>
<dbReference type="GO" id="GO:0007623">
    <property type="term" value="P:circadian rhythm"/>
    <property type="evidence" value="ECO:0000250"/>
    <property type="project" value="UniProtKB"/>
</dbReference>
<dbReference type="GO" id="GO:0009749">
    <property type="term" value="P:response to glucose"/>
    <property type="evidence" value="ECO:0000270"/>
    <property type="project" value="RGD"/>
</dbReference>
<dbReference type="GO" id="GO:0006744">
    <property type="term" value="P:ubiquinone biosynthetic process"/>
    <property type="evidence" value="ECO:0000318"/>
    <property type="project" value="GO_Central"/>
</dbReference>
<dbReference type="CDD" id="cd05271">
    <property type="entry name" value="NDUFA9_like_SDR_a"/>
    <property type="match status" value="1"/>
</dbReference>
<dbReference type="FunFam" id="3.40.50.720:FF:000246">
    <property type="entry name" value="NADH dehydrogenase [ubiquinone] 1 alpha subcomplex subunit 9, mitochondrial"/>
    <property type="match status" value="1"/>
</dbReference>
<dbReference type="Gene3D" id="3.40.50.720">
    <property type="entry name" value="NAD(P)-binding Rossmann-like Domain"/>
    <property type="match status" value="1"/>
</dbReference>
<dbReference type="InterPro" id="IPR051207">
    <property type="entry name" value="ComplexI_NDUFA9_subunit"/>
</dbReference>
<dbReference type="InterPro" id="IPR036291">
    <property type="entry name" value="NAD(P)-bd_dom_sf"/>
</dbReference>
<dbReference type="InterPro" id="IPR008030">
    <property type="entry name" value="NmrA-like"/>
</dbReference>
<dbReference type="PANTHER" id="PTHR12126:SF11">
    <property type="entry name" value="NADH DEHYDROGENASE [UBIQUINONE] 1 ALPHA SUBCOMPLEX SUBUNIT 9, MITOCHONDRIAL"/>
    <property type="match status" value="1"/>
</dbReference>
<dbReference type="PANTHER" id="PTHR12126">
    <property type="entry name" value="NADH-UBIQUINONE OXIDOREDUCTASE 39 KDA SUBUNIT-RELATED"/>
    <property type="match status" value="1"/>
</dbReference>
<dbReference type="Pfam" id="PF05368">
    <property type="entry name" value="NmrA"/>
    <property type="match status" value="1"/>
</dbReference>
<dbReference type="SUPFAM" id="SSF51735">
    <property type="entry name" value="NAD(P)-binding Rossmann-fold domains"/>
    <property type="match status" value="1"/>
</dbReference>
<reference key="1">
    <citation type="submission" date="2005-08" db="EMBL/GenBank/DDBJ databases">
        <authorList>
            <person name="Mural R.J."/>
            <person name="Adams M.D."/>
            <person name="Myers E.W."/>
            <person name="Smith H.O."/>
            <person name="Venter J.C."/>
        </authorList>
    </citation>
    <scope>NUCLEOTIDE SEQUENCE [LARGE SCALE GENOMIC DNA]</scope>
    <source>
        <strain>Brown Norway</strain>
    </source>
</reference>
<reference evidence="8" key="2">
    <citation type="journal article" date="2004" name="Genome Res.">
        <title>The status, quality, and expansion of the NIH full-length cDNA project: the Mammalian Gene Collection (MGC).</title>
        <authorList>
            <consortium name="The MGC Project Team"/>
        </authorList>
    </citation>
    <scope>NUCLEOTIDE SEQUENCE [LARGE SCALE MRNA]</scope>
    <source>
        <tissue evidence="8">Liver</tissue>
        <tissue>Pituitary anterior lobe</tissue>
    </source>
</reference>
<reference evidence="7" key="3">
    <citation type="journal article" date="2006" name="J. Proteome Res.">
        <title>Insulin-dependent interactions of proteins with GLUT4 revealed through stable isotope labeling by amino acids in cell culture (SILAC).</title>
        <authorList>
            <person name="Foster L.J."/>
            <person name="Rudich A."/>
            <person name="Talior I."/>
            <person name="Patel N."/>
            <person name="Huang X."/>
            <person name="Furtado L.M."/>
            <person name="Bilan P.J."/>
            <person name="Mann M."/>
            <person name="Klip A."/>
        </authorList>
    </citation>
    <scope>INTERACTION WITH SLC2A4</scope>
</reference>
<reference key="4">
    <citation type="journal article" date="2009" name="Reproduction">
        <title>Identification of novel immunodominant epididymal sperm proteins using combinatorial approach.</title>
        <authorList>
            <person name="Khan S.A."/>
            <person name="Suryawanshi A.R."/>
            <person name="Ranpura S.A."/>
            <person name="Jadhav S.V."/>
            <person name="Khole V.V."/>
        </authorList>
    </citation>
    <scope>IDENTIFICATION BY MASS SPECTROMETRY</scope>
    <scope>TISSUE SPECIFICITY</scope>
    <source>
        <strain>Holtzman</strain>
        <tissue>Epididymis</tissue>
        <tissue>Sperm</tissue>
    </source>
</reference>
<name>NDUA9_RAT</name>
<gene>
    <name evidence="8 9" type="primary">Ndufa9</name>
</gene>
<accession>Q5BK63</accession>
<accession>B5DER7</accession>
<sequence>MAAAVRFQVVRALPMSRPAISAAATSVFCSSSHRQLHHAVIPHGKGGRSSVSGVVATVFGATGFLGRYVVNHLGRMGSQVIIPYRCDIYDTMHLRLMGDLGQLIFLEWDARDKDSIRKAVQHSNVVINLIGREWETRNFDFEDVFVNIPRAIAQASKEAGVERFIHVSHLNASMKSSAKSLRSKAVGEKEVRTVFPDAIIIRPSDMFGREDRFLNHFANYRWFLAVPLVSLGFKTVKQPVYVADVSKGIANATKNPDAIGKTFAFTGPNRYLLFHLVKYIFGMTHRTFIPYPLPRFVYSWIGRLFGLSPFEPWTTKDKVERIHISDVMATDLPGLEDLGVQPTPLELKSIEVLRRHRTYRWLSSEIEETKPAKTVNY</sequence>
<comment type="function">
    <text evidence="2">Accessory subunit of the mitochondrial membrane respiratory chain NADH dehydrogenase (Complex I), that is believed not to be involved in catalysis. Complex I functions in the transfer of electrons from NADH to the respiratory chain. The immediate electron acceptor for the enzyme is believed to be ubiquinone.</text>
</comment>
<comment type="cofactor">
    <cofactor evidence="7">
        <name>FAD</name>
        <dbReference type="ChEBI" id="CHEBI:57692"/>
    </cofactor>
    <text evidence="7">Binds 1 FAD per subunit.</text>
</comment>
<comment type="subunit">
    <text evidence="2 5">Complex I is composed of 45 different subunits (By similarity). This a component of the hydrophobic protein fraction (By similarity). Interacts with BLOC1S1 (By similarity). Interacts with SLC2A4 (PubMed:16396496). Interacts with CLOCK (By similarity). Interacts with RAB5IF (By similarity).</text>
</comment>
<comment type="subcellular location">
    <subcellularLocation>
        <location evidence="2">Mitochondrion matrix</location>
    </subcellularLocation>
</comment>
<comment type="tissue specificity">
    <text evidence="6">Expressed by the principal cells of the epididymis. Detected in flagella of epididymal sperm (at protein level).</text>
</comment>
<comment type="PTM">
    <text evidence="2">Acetylated on lysine residues. BLOC1S1 is required for acetylation. Acetylated by CLOCK in a circadian manner.</text>
</comment>
<comment type="similarity">
    <text evidence="4">Belongs to the complex I NDUFA9 subunit family.</text>
</comment>